<sequence>MGSEENNSTSFPPTEPKLCDNGCGFFGSPSNMNLCSKCYRSLRAEEDQTAVAKAAVKNSLKLPSCSIIAPGQKHPLEIKPAHLETVVVTAEPSSVPVAAEQDEAEPSRPVRPNNRCFSCNKKVGVMGFKCKCGSTFCGSHRYPEKHECSFDFKEVGRDAIAKANPLVKADKVQRI</sequence>
<comment type="function">
    <text evidence="1">May be involved in environmental stress response.</text>
</comment>
<accession>Q9SZ69</accession>
<organism>
    <name type="scientific">Arabidopsis thaliana</name>
    <name type="common">Mouse-ear cress</name>
    <dbReference type="NCBI Taxonomy" id="3702"/>
    <lineage>
        <taxon>Eukaryota</taxon>
        <taxon>Viridiplantae</taxon>
        <taxon>Streptophyta</taxon>
        <taxon>Embryophyta</taxon>
        <taxon>Tracheophyta</taxon>
        <taxon>Spermatophyta</taxon>
        <taxon>Magnoliopsida</taxon>
        <taxon>eudicotyledons</taxon>
        <taxon>Gunneridae</taxon>
        <taxon>Pentapetalae</taxon>
        <taxon>rosids</taxon>
        <taxon>malvids</taxon>
        <taxon>Brassicales</taxon>
        <taxon>Brassicaceae</taxon>
        <taxon>Camelineae</taxon>
        <taxon>Arabidopsis</taxon>
    </lineage>
</organism>
<gene>
    <name type="primary">SAP7</name>
    <name type="ordered locus">At4g12040</name>
    <name type="ORF">F16J13.110</name>
</gene>
<protein>
    <recommendedName>
        <fullName>Zinc finger A20 and AN1 domain-containing stress-associated protein 7</fullName>
        <shortName>AtSAP7</shortName>
    </recommendedName>
</protein>
<keyword id="KW-0002">3D-structure</keyword>
<keyword id="KW-0479">Metal-binding</keyword>
<keyword id="KW-1185">Reference proteome</keyword>
<keyword id="KW-0862">Zinc</keyword>
<keyword id="KW-0863">Zinc-finger</keyword>
<evidence type="ECO:0000250" key="1"/>
<evidence type="ECO:0000255" key="2">
    <source>
        <dbReference type="PROSITE-ProRule" id="PRU00449"/>
    </source>
</evidence>
<evidence type="ECO:0000255" key="3">
    <source>
        <dbReference type="PROSITE-ProRule" id="PRU00451"/>
    </source>
</evidence>
<evidence type="ECO:0007829" key="4">
    <source>
        <dbReference type="PDB" id="1WG2"/>
    </source>
</evidence>
<feature type="chain" id="PRO_0000066579" description="Zinc finger A20 and AN1 domain-containing stress-associated protein 7">
    <location>
        <begin position="1"/>
        <end position="175"/>
    </location>
</feature>
<feature type="zinc finger region" description="A20-type" evidence="3">
    <location>
        <begin position="13"/>
        <end position="47"/>
    </location>
</feature>
<feature type="zinc finger region" description="AN1-type" evidence="2">
    <location>
        <begin position="110"/>
        <end position="156"/>
    </location>
</feature>
<feature type="binding site" evidence="3">
    <location>
        <position position="19"/>
    </location>
    <ligand>
        <name>Zn(2+)</name>
        <dbReference type="ChEBI" id="CHEBI:29105"/>
        <label>1</label>
    </ligand>
</feature>
<feature type="binding site" evidence="3">
    <location>
        <position position="23"/>
    </location>
    <ligand>
        <name>Zn(2+)</name>
        <dbReference type="ChEBI" id="CHEBI:29105"/>
        <label>1</label>
    </ligand>
</feature>
<feature type="binding site" evidence="3">
    <location>
        <position position="35"/>
    </location>
    <ligand>
        <name>Zn(2+)</name>
        <dbReference type="ChEBI" id="CHEBI:29105"/>
        <label>1</label>
    </ligand>
</feature>
<feature type="binding site" evidence="3">
    <location>
        <position position="38"/>
    </location>
    <ligand>
        <name>Zn(2+)</name>
        <dbReference type="ChEBI" id="CHEBI:29105"/>
        <label>1</label>
    </ligand>
</feature>
<feature type="binding site" evidence="2">
    <location>
        <position position="116"/>
    </location>
    <ligand>
        <name>Zn(2+)</name>
        <dbReference type="ChEBI" id="CHEBI:29105"/>
        <label>2</label>
    </ligand>
</feature>
<feature type="binding site" evidence="2">
    <location>
        <position position="119"/>
    </location>
    <ligand>
        <name>Zn(2+)</name>
        <dbReference type="ChEBI" id="CHEBI:29105"/>
        <label>2</label>
    </ligand>
</feature>
<feature type="binding site" evidence="2">
    <location>
        <position position="130"/>
    </location>
    <ligand>
        <name>Zn(2+)</name>
        <dbReference type="ChEBI" id="CHEBI:29105"/>
        <label>3</label>
    </ligand>
</feature>
<feature type="binding site" evidence="2">
    <location>
        <position position="132"/>
    </location>
    <ligand>
        <name>Zn(2+)</name>
        <dbReference type="ChEBI" id="CHEBI:29105"/>
        <label>3</label>
    </ligand>
</feature>
<feature type="binding site" evidence="2">
    <location>
        <position position="137"/>
    </location>
    <ligand>
        <name>Zn(2+)</name>
        <dbReference type="ChEBI" id="CHEBI:29105"/>
        <label>2</label>
    </ligand>
</feature>
<feature type="binding site" evidence="2">
    <location>
        <position position="140"/>
    </location>
    <ligand>
        <name>Zn(2+)</name>
        <dbReference type="ChEBI" id="CHEBI:29105"/>
        <label>2</label>
    </ligand>
</feature>
<feature type="binding site" evidence="2">
    <location>
        <position position="146"/>
    </location>
    <ligand>
        <name>Zn(2+)</name>
        <dbReference type="ChEBI" id="CHEBI:29105"/>
        <label>3</label>
    </ligand>
</feature>
<feature type="binding site" evidence="2">
    <location>
        <position position="148"/>
    </location>
    <ligand>
        <name>Zn(2+)</name>
        <dbReference type="ChEBI" id="CHEBI:29105"/>
        <label>3</label>
    </ligand>
</feature>
<feature type="turn" evidence="4">
    <location>
        <begin position="117"/>
        <end position="119"/>
    </location>
</feature>
<feature type="strand" evidence="4">
    <location>
        <begin position="138"/>
        <end position="140"/>
    </location>
</feature>
<feature type="turn" evidence="4">
    <location>
        <begin position="144"/>
        <end position="147"/>
    </location>
</feature>
<name>SAP7_ARATH</name>
<proteinExistence type="evidence at protein level"/>
<reference key="1">
    <citation type="journal article" date="1999" name="Nature">
        <title>Sequence and analysis of chromosome 4 of the plant Arabidopsis thaliana.</title>
        <authorList>
            <person name="Mayer K.F.X."/>
            <person name="Schueller C."/>
            <person name="Wambutt R."/>
            <person name="Murphy G."/>
            <person name="Volckaert G."/>
            <person name="Pohl T."/>
            <person name="Duesterhoeft A."/>
            <person name="Stiekema W."/>
            <person name="Entian K.-D."/>
            <person name="Terryn N."/>
            <person name="Harris B."/>
            <person name="Ansorge W."/>
            <person name="Brandt P."/>
            <person name="Grivell L.A."/>
            <person name="Rieger M."/>
            <person name="Weichselgartner M."/>
            <person name="de Simone V."/>
            <person name="Obermaier B."/>
            <person name="Mache R."/>
            <person name="Mueller M."/>
            <person name="Kreis M."/>
            <person name="Delseny M."/>
            <person name="Puigdomenech P."/>
            <person name="Watson M."/>
            <person name="Schmidtheini T."/>
            <person name="Reichert B."/>
            <person name="Portetelle D."/>
            <person name="Perez-Alonso M."/>
            <person name="Boutry M."/>
            <person name="Bancroft I."/>
            <person name="Vos P."/>
            <person name="Hoheisel J."/>
            <person name="Zimmermann W."/>
            <person name="Wedler H."/>
            <person name="Ridley P."/>
            <person name="Langham S.-A."/>
            <person name="McCullagh B."/>
            <person name="Bilham L."/>
            <person name="Robben J."/>
            <person name="van der Schueren J."/>
            <person name="Grymonprez B."/>
            <person name="Chuang Y.-J."/>
            <person name="Vandenbussche F."/>
            <person name="Braeken M."/>
            <person name="Weltjens I."/>
            <person name="Voet M."/>
            <person name="Bastiaens I."/>
            <person name="Aert R."/>
            <person name="Defoor E."/>
            <person name="Weitzenegger T."/>
            <person name="Bothe G."/>
            <person name="Ramsperger U."/>
            <person name="Hilbert H."/>
            <person name="Braun M."/>
            <person name="Holzer E."/>
            <person name="Brandt A."/>
            <person name="Peters S."/>
            <person name="van Staveren M."/>
            <person name="Dirkse W."/>
            <person name="Mooijman P."/>
            <person name="Klein Lankhorst R."/>
            <person name="Rose M."/>
            <person name="Hauf J."/>
            <person name="Koetter P."/>
            <person name="Berneiser S."/>
            <person name="Hempel S."/>
            <person name="Feldpausch M."/>
            <person name="Lamberth S."/>
            <person name="Van den Daele H."/>
            <person name="De Keyser A."/>
            <person name="Buysshaert C."/>
            <person name="Gielen J."/>
            <person name="Villarroel R."/>
            <person name="De Clercq R."/>
            <person name="van Montagu M."/>
            <person name="Rogers J."/>
            <person name="Cronin A."/>
            <person name="Quail M.A."/>
            <person name="Bray-Allen S."/>
            <person name="Clark L."/>
            <person name="Doggett J."/>
            <person name="Hall S."/>
            <person name="Kay M."/>
            <person name="Lennard N."/>
            <person name="McLay K."/>
            <person name="Mayes R."/>
            <person name="Pettett A."/>
            <person name="Rajandream M.A."/>
            <person name="Lyne M."/>
            <person name="Benes V."/>
            <person name="Rechmann S."/>
            <person name="Borkova D."/>
            <person name="Bloecker H."/>
            <person name="Scharfe M."/>
            <person name="Grimm M."/>
            <person name="Loehnert T.-H."/>
            <person name="Dose S."/>
            <person name="de Haan M."/>
            <person name="Maarse A.C."/>
            <person name="Schaefer M."/>
            <person name="Mueller-Auer S."/>
            <person name="Gabel C."/>
            <person name="Fuchs M."/>
            <person name="Fartmann B."/>
            <person name="Granderath K."/>
            <person name="Dauner D."/>
            <person name="Herzl A."/>
            <person name="Neumann S."/>
            <person name="Argiriou A."/>
            <person name="Vitale D."/>
            <person name="Liguori R."/>
            <person name="Piravandi E."/>
            <person name="Massenet O."/>
            <person name="Quigley F."/>
            <person name="Clabauld G."/>
            <person name="Muendlein A."/>
            <person name="Felber R."/>
            <person name="Schnabl S."/>
            <person name="Hiller R."/>
            <person name="Schmidt W."/>
            <person name="Lecharny A."/>
            <person name="Aubourg S."/>
            <person name="Chefdor F."/>
            <person name="Cooke R."/>
            <person name="Berger C."/>
            <person name="Monfort A."/>
            <person name="Casacuberta E."/>
            <person name="Gibbons T."/>
            <person name="Weber N."/>
            <person name="Vandenbol M."/>
            <person name="Bargues M."/>
            <person name="Terol J."/>
            <person name="Torres A."/>
            <person name="Perez-Perez A."/>
            <person name="Purnelle B."/>
            <person name="Bent E."/>
            <person name="Johnson S."/>
            <person name="Tacon D."/>
            <person name="Jesse T."/>
            <person name="Heijnen L."/>
            <person name="Schwarz S."/>
            <person name="Scholler P."/>
            <person name="Heber S."/>
            <person name="Francs P."/>
            <person name="Bielke C."/>
            <person name="Frishman D."/>
            <person name="Haase D."/>
            <person name="Lemcke K."/>
            <person name="Mewes H.-W."/>
            <person name="Stocker S."/>
            <person name="Zaccaria P."/>
            <person name="Bevan M."/>
            <person name="Wilson R.K."/>
            <person name="de la Bastide M."/>
            <person name="Habermann K."/>
            <person name="Parnell L."/>
            <person name="Dedhia N."/>
            <person name="Gnoj L."/>
            <person name="Schutz K."/>
            <person name="Huang E."/>
            <person name="Spiegel L."/>
            <person name="Sekhon M."/>
            <person name="Murray J."/>
            <person name="Sheet P."/>
            <person name="Cordes M."/>
            <person name="Abu-Threideh J."/>
            <person name="Stoneking T."/>
            <person name="Kalicki J."/>
            <person name="Graves T."/>
            <person name="Harmon G."/>
            <person name="Edwards J."/>
            <person name="Latreille P."/>
            <person name="Courtney L."/>
            <person name="Cloud J."/>
            <person name="Abbott A."/>
            <person name="Scott K."/>
            <person name="Johnson D."/>
            <person name="Minx P."/>
            <person name="Bentley D."/>
            <person name="Fulton B."/>
            <person name="Miller N."/>
            <person name="Greco T."/>
            <person name="Kemp K."/>
            <person name="Kramer J."/>
            <person name="Fulton L."/>
            <person name="Mardis E."/>
            <person name="Dante M."/>
            <person name="Pepin K."/>
            <person name="Hillier L.W."/>
            <person name="Nelson J."/>
            <person name="Spieth J."/>
            <person name="Ryan E."/>
            <person name="Andrews S."/>
            <person name="Geisel C."/>
            <person name="Layman D."/>
            <person name="Du H."/>
            <person name="Ali J."/>
            <person name="Berghoff A."/>
            <person name="Jones K."/>
            <person name="Drone K."/>
            <person name="Cotton M."/>
            <person name="Joshu C."/>
            <person name="Antonoiu B."/>
            <person name="Zidanic M."/>
            <person name="Strong C."/>
            <person name="Sun H."/>
            <person name="Lamar B."/>
            <person name="Yordan C."/>
            <person name="Ma P."/>
            <person name="Zhong J."/>
            <person name="Preston R."/>
            <person name="Vil D."/>
            <person name="Shekher M."/>
            <person name="Matero A."/>
            <person name="Shah R."/>
            <person name="Swaby I.K."/>
            <person name="O'Shaughnessy A."/>
            <person name="Rodriguez M."/>
            <person name="Hoffman J."/>
            <person name="Till S."/>
            <person name="Granat S."/>
            <person name="Shohdy N."/>
            <person name="Hasegawa A."/>
            <person name="Hameed A."/>
            <person name="Lodhi M."/>
            <person name="Johnson A."/>
            <person name="Chen E."/>
            <person name="Marra M.A."/>
            <person name="Martienssen R."/>
            <person name="McCombie W.R."/>
        </authorList>
    </citation>
    <scope>NUCLEOTIDE SEQUENCE [LARGE SCALE GENOMIC DNA]</scope>
    <source>
        <strain>cv. Columbia</strain>
    </source>
</reference>
<reference key="2">
    <citation type="journal article" date="2017" name="Plant J.">
        <title>Araport11: a complete reannotation of the Arabidopsis thaliana reference genome.</title>
        <authorList>
            <person name="Cheng C.Y."/>
            <person name="Krishnakumar V."/>
            <person name="Chan A.P."/>
            <person name="Thibaud-Nissen F."/>
            <person name="Schobel S."/>
            <person name="Town C.D."/>
        </authorList>
    </citation>
    <scope>GENOME REANNOTATION</scope>
    <source>
        <strain>cv. Columbia</strain>
    </source>
</reference>
<reference key="3">
    <citation type="journal article" date="2003" name="Science">
        <title>Empirical analysis of transcriptional activity in the Arabidopsis genome.</title>
        <authorList>
            <person name="Yamada K."/>
            <person name="Lim J."/>
            <person name="Dale J.M."/>
            <person name="Chen H."/>
            <person name="Shinn P."/>
            <person name="Palm C.J."/>
            <person name="Southwick A.M."/>
            <person name="Wu H.C."/>
            <person name="Kim C.J."/>
            <person name="Nguyen M."/>
            <person name="Pham P.K."/>
            <person name="Cheuk R.F."/>
            <person name="Karlin-Newmann G."/>
            <person name="Liu S.X."/>
            <person name="Lam B."/>
            <person name="Sakano H."/>
            <person name="Wu T."/>
            <person name="Yu G."/>
            <person name="Miranda M."/>
            <person name="Quach H.L."/>
            <person name="Tripp M."/>
            <person name="Chang C.H."/>
            <person name="Lee J.M."/>
            <person name="Toriumi M.J."/>
            <person name="Chan M.M."/>
            <person name="Tang C.C."/>
            <person name="Onodera C.S."/>
            <person name="Deng J.M."/>
            <person name="Akiyama K."/>
            <person name="Ansari Y."/>
            <person name="Arakawa T."/>
            <person name="Banh J."/>
            <person name="Banno F."/>
            <person name="Bowser L."/>
            <person name="Brooks S.Y."/>
            <person name="Carninci P."/>
            <person name="Chao Q."/>
            <person name="Choy N."/>
            <person name="Enju A."/>
            <person name="Goldsmith A.D."/>
            <person name="Gurjal M."/>
            <person name="Hansen N.F."/>
            <person name="Hayashizaki Y."/>
            <person name="Johnson-Hopson C."/>
            <person name="Hsuan V.W."/>
            <person name="Iida K."/>
            <person name="Karnes M."/>
            <person name="Khan S."/>
            <person name="Koesema E."/>
            <person name="Ishida J."/>
            <person name="Jiang P.X."/>
            <person name="Jones T."/>
            <person name="Kawai J."/>
            <person name="Kamiya A."/>
            <person name="Meyers C."/>
            <person name="Nakajima M."/>
            <person name="Narusaka M."/>
            <person name="Seki M."/>
            <person name="Sakurai T."/>
            <person name="Satou M."/>
            <person name="Tamse R."/>
            <person name="Vaysberg M."/>
            <person name="Wallender E.K."/>
            <person name="Wong C."/>
            <person name="Yamamura Y."/>
            <person name="Yuan S."/>
            <person name="Shinozaki K."/>
            <person name="Davis R.W."/>
            <person name="Theologis A."/>
            <person name="Ecker J.R."/>
        </authorList>
    </citation>
    <scope>NUCLEOTIDE SEQUENCE [LARGE SCALE MRNA]</scope>
    <source>
        <strain>cv. Columbia</strain>
    </source>
</reference>
<reference key="4">
    <citation type="submission" date="2002-03" db="EMBL/GenBank/DDBJ databases">
        <title>Full-length cDNA from Arabidopsis thaliana.</title>
        <authorList>
            <person name="Brover V.V."/>
            <person name="Troukhan M.E."/>
            <person name="Alexandrov N.A."/>
            <person name="Lu Y.-P."/>
            <person name="Flavell R.B."/>
            <person name="Feldmann K.A."/>
        </authorList>
    </citation>
    <scope>NUCLEOTIDE SEQUENCE [LARGE SCALE MRNA]</scope>
</reference>
<reference key="5">
    <citation type="journal article" date="2006" name="Mol. Genet. Genomics">
        <title>Genome-wide analysis of the stress associated protein (SAP) gene family containing A20/AN1 zinc-finger(s) in rice and their phylogenetic relationship with Arabidopsis.</title>
        <authorList>
            <person name="Vij S."/>
            <person name="Tyagi A.K."/>
        </authorList>
    </citation>
    <scope>GENE FAMILY</scope>
</reference>
<reference key="6">
    <citation type="submission" date="2004-11" db="PDB data bank">
        <title>Solution structure of ZF-AN1 domain from Arabidopsis thaliana.</title>
        <authorList>
            <consortium name="RIKEN structural genomics initiative (RSGI)"/>
        </authorList>
    </citation>
    <scope>STRUCTURE BY NMR OF 106-156</scope>
</reference>
<dbReference type="EMBL" id="AL049638">
    <property type="protein sequence ID" value="CAB40945.1"/>
    <property type="molecule type" value="Genomic_DNA"/>
</dbReference>
<dbReference type="EMBL" id="AL161533">
    <property type="protein sequence ID" value="CAB78247.1"/>
    <property type="molecule type" value="Genomic_DNA"/>
</dbReference>
<dbReference type="EMBL" id="CP002687">
    <property type="protein sequence ID" value="AEE83089.1"/>
    <property type="molecule type" value="Genomic_DNA"/>
</dbReference>
<dbReference type="EMBL" id="CP002687">
    <property type="protein sequence ID" value="AEE83090.1"/>
    <property type="molecule type" value="Genomic_DNA"/>
</dbReference>
<dbReference type="EMBL" id="AF325093">
    <property type="protein sequence ID" value="AAK17161.1"/>
    <property type="molecule type" value="mRNA"/>
</dbReference>
<dbReference type="EMBL" id="AF361575">
    <property type="protein sequence ID" value="AAK32743.1"/>
    <property type="molecule type" value="mRNA"/>
</dbReference>
<dbReference type="EMBL" id="AY081720">
    <property type="protein sequence ID" value="AAL87373.1"/>
    <property type="molecule type" value="mRNA"/>
</dbReference>
<dbReference type="EMBL" id="AY088226">
    <property type="protein sequence ID" value="AAM65767.1"/>
    <property type="molecule type" value="mRNA"/>
</dbReference>
<dbReference type="PIR" id="T06611">
    <property type="entry name" value="T06611"/>
</dbReference>
<dbReference type="RefSeq" id="NP_192941.1">
    <property type="nucleotide sequence ID" value="NM_117274.3"/>
</dbReference>
<dbReference type="RefSeq" id="NP_849364.1">
    <property type="nucleotide sequence ID" value="NM_179033.1"/>
</dbReference>
<dbReference type="PDB" id="1WG2">
    <property type="method" value="NMR"/>
    <property type="chains" value="A=106-156"/>
</dbReference>
<dbReference type="PDBsum" id="1WG2"/>
<dbReference type="SMR" id="Q9SZ69"/>
<dbReference type="BioGRID" id="12110">
    <property type="interactions" value="1"/>
</dbReference>
<dbReference type="FunCoup" id="Q9SZ69">
    <property type="interactions" value="2947"/>
</dbReference>
<dbReference type="STRING" id="3702.Q9SZ69"/>
<dbReference type="PaxDb" id="3702-AT4G12040.2"/>
<dbReference type="ProteomicsDB" id="226645"/>
<dbReference type="EnsemblPlants" id="AT4G12040.1">
    <property type="protein sequence ID" value="AT4G12040.1"/>
    <property type="gene ID" value="AT4G12040"/>
</dbReference>
<dbReference type="EnsemblPlants" id="AT4G12040.2">
    <property type="protein sequence ID" value="AT4G12040.2"/>
    <property type="gene ID" value="AT4G12040"/>
</dbReference>
<dbReference type="GeneID" id="826812"/>
<dbReference type="Gramene" id="AT4G12040.1">
    <property type="protein sequence ID" value="AT4G12040.1"/>
    <property type="gene ID" value="AT4G12040"/>
</dbReference>
<dbReference type="Gramene" id="AT4G12040.2">
    <property type="protein sequence ID" value="AT4G12040.2"/>
    <property type="gene ID" value="AT4G12040"/>
</dbReference>
<dbReference type="KEGG" id="ath:AT4G12040"/>
<dbReference type="Araport" id="AT4G12040"/>
<dbReference type="TAIR" id="AT4G12040">
    <property type="gene designation" value="SAP7"/>
</dbReference>
<dbReference type="eggNOG" id="KOG3173">
    <property type="taxonomic scope" value="Eukaryota"/>
</dbReference>
<dbReference type="HOGENOM" id="CLU_057016_5_0_1"/>
<dbReference type="InParanoid" id="Q9SZ69"/>
<dbReference type="OMA" id="SKAANRC"/>
<dbReference type="PhylomeDB" id="Q9SZ69"/>
<dbReference type="EvolutionaryTrace" id="Q9SZ69"/>
<dbReference type="PRO" id="PR:Q9SZ69"/>
<dbReference type="Proteomes" id="UP000006548">
    <property type="component" value="Chromosome 4"/>
</dbReference>
<dbReference type="ExpressionAtlas" id="Q9SZ69">
    <property type="expression patterns" value="baseline and differential"/>
</dbReference>
<dbReference type="GO" id="GO:0009506">
    <property type="term" value="C:plasmodesma"/>
    <property type="evidence" value="ECO:0007005"/>
    <property type="project" value="TAIR"/>
</dbReference>
<dbReference type="GO" id="GO:0003677">
    <property type="term" value="F:DNA binding"/>
    <property type="evidence" value="ECO:0007669"/>
    <property type="project" value="InterPro"/>
</dbReference>
<dbReference type="GO" id="GO:0008270">
    <property type="term" value="F:zinc ion binding"/>
    <property type="evidence" value="ECO:0007669"/>
    <property type="project" value="UniProtKB-KW"/>
</dbReference>
<dbReference type="FunFam" id="1.20.5.4770:FF:000008">
    <property type="entry name" value="Zinc finger A20 and AN1 domain-containing stress-associated protein 1"/>
    <property type="match status" value="1"/>
</dbReference>
<dbReference type="FunFam" id="4.10.1110.10:FF:000001">
    <property type="entry name" value="Zinc finger AN1-type containing 6"/>
    <property type="match status" value="1"/>
</dbReference>
<dbReference type="Gene3D" id="1.20.5.4770">
    <property type="match status" value="1"/>
</dbReference>
<dbReference type="Gene3D" id="4.10.1110.10">
    <property type="entry name" value="AN1-like Zinc finger"/>
    <property type="match status" value="1"/>
</dbReference>
<dbReference type="InterPro" id="IPR035896">
    <property type="entry name" value="AN1-like_Znf"/>
</dbReference>
<dbReference type="InterPro" id="IPR050652">
    <property type="entry name" value="AN1_A20_ZnFinger"/>
</dbReference>
<dbReference type="InterPro" id="IPR002653">
    <property type="entry name" value="Znf_A20"/>
</dbReference>
<dbReference type="InterPro" id="IPR000058">
    <property type="entry name" value="Znf_AN1"/>
</dbReference>
<dbReference type="PANTHER" id="PTHR10634">
    <property type="entry name" value="AN1-TYPE ZINC FINGER PROTEIN"/>
    <property type="match status" value="1"/>
</dbReference>
<dbReference type="PANTHER" id="PTHR10634:SF150">
    <property type="entry name" value="ZINC FINGER A20 AND AN1 DOMAIN-CONTAINING STRESS-ASSOCIATED PROTEIN 7"/>
    <property type="match status" value="1"/>
</dbReference>
<dbReference type="Pfam" id="PF01754">
    <property type="entry name" value="zf-A20"/>
    <property type="match status" value="1"/>
</dbReference>
<dbReference type="Pfam" id="PF01428">
    <property type="entry name" value="zf-AN1"/>
    <property type="match status" value="1"/>
</dbReference>
<dbReference type="SMART" id="SM00259">
    <property type="entry name" value="ZnF_A20"/>
    <property type="match status" value="1"/>
</dbReference>
<dbReference type="SMART" id="SM00154">
    <property type="entry name" value="ZnF_AN1"/>
    <property type="match status" value="1"/>
</dbReference>
<dbReference type="SUPFAM" id="SSF118310">
    <property type="entry name" value="AN1-like Zinc finger"/>
    <property type="match status" value="1"/>
</dbReference>
<dbReference type="SUPFAM" id="SSF57716">
    <property type="entry name" value="Glucocorticoid receptor-like (DNA-binding domain)"/>
    <property type="match status" value="1"/>
</dbReference>
<dbReference type="PROSITE" id="PS51036">
    <property type="entry name" value="ZF_A20"/>
    <property type="match status" value="1"/>
</dbReference>
<dbReference type="PROSITE" id="PS51039">
    <property type="entry name" value="ZF_AN1"/>
    <property type="match status" value="1"/>
</dbReference>